<name>LIPB_SHEB8</name>
<reference key="1">
    <citation type="submission" date="2007-07" db="EMBL/GenBank/DDBJ databases">
        <title>Complete sequence of chromosome of Shewanella baltica OS185.</title>
        <authorList>
            <consortium name="US DOE Joint Genome Institute"/>
            <person name="Copeland A."/>
            <person name="Lucas S."/>
            <person name="Lapidus A."/>
            <person name="Barry K."/>
            <person name="Glavina del Rio T."/>
            <person name="Dalin E."/>
            <person name="Tice H."/>
            <person name="Pitluck S."/>
            <person name="Sims D."/>
            <person name="Brettin T."/>
            <person name="Bruce D."/>
            <person name="Detter J.C."/>
            <person name="Han C."/>
            <person name="Schmutz J."/>
            <person name="Larimer F."/>
            <person name="Land M."/>
            <person name="Hauser L."/>
            <person name="Kyrpides N."/>
            <person name="Mikhailova N."/>
            <person name="Brettar I."/>
            <person name="Rodrigues J."/>
            <person name="Konstantinidis K."/>
            <person name="Tiedje J."/>
            <person name="Richardson P."/>
        </authorList>
    </citation>
    <scope>NUCLEOTIDE SEQUENCE [LARGE SCALE GENOMIC DNA]</scope>
    <source>
        <strain>OS185</strain>
    </source>
</reference>
<accession>A6WRL1</accession>
<organism>
    <name type="scientific">Shewanella baltica (strain OS185)</name>
    <dbReference type="NCBI Taxonomy" id="402882"/>
    <lineage>
        <taxon>Bacteria</taxon>
        <taxon>Pseudomonadati</taxon>
        <taxon>Pseudomonadota</taxon>
        <taxon>Gammaproteobacteria</taxon>
        <taxon>Alteromonadales</taxon>
        <taxon>Shewanellaceae</taxon>
        <taxon>Shewanella</taxon>
    </lineage>
</organism>
<sequence length="217" mass="24099">MQDTTLHIRHLGKQDYESVWHAMQHYTDTRDSESHDELWIVEHPPVFTQGQAGKSEHILNAGDIPVIQVDRGGQVTYHGPGQLVVYPLLDIKRSKVGVRQLVTHIEQSIVDMLAKYDINAYAKADAPGVYVDERKIASLGLRIRKGCSFHGLALNVDMDLAPFRRINPCGYAGLEMVQCKALGGPQTVIEAGEQLTITFSQLLGYQHLVHHQGLAAS</sequence>
<keyword id="KW-0012">Acyltransferase</keyword>
<keyword id="KW-0963">Cytoplasm</keyword>
<keyword id="KW-0808">Transferase</keyword>
<gene>
    <name evidence="1" type="primary">lipB</name>
    <name type="ordered locus">Shew185_3323</name>
</gene>
<dbReference type="EC" id="2.3.1.181" evidence="1"/>
<dbReference type="EMBL" id="CP000753">
    <property type="protein sequence ID" value="ABS09450.1"/>
    <property type="molecule type" value="Genomic_DNA"/>
</dbReference>
<dbReference type="RefSeq" id="WP_006082759.1">
    <property type="nucleotide sequence ID" value="NC_009665.1"/>
</dbReference>
<dbReference type="SMR" id="A6WRL1"/>
<dbReference type="GeneID" id="11773505"/>
<dbReference type="KEGG" id="sbm:Shew185_3323"/>
<dbReference type="HOGENOM" id="CLU_035168_3_1_6"/>
<dbReference type="UniPathway" id="UPA00538">
    <property type="reaction ID" value="UER00592"/>
</dbReference>
<dbReference type="GO" id="GO:0005737">
    <property type="term" value="C:cytoplasm"/>
    <property type="evidence" value="ECO:0007669"/>
    <property type="project" value="UniProtKB-SubCell"/>
</dbReference>
<dbReference type="GO" id="GO:0033819">
    <property type="term" value="F:lipoyl(octanoyl) transferase activity"/>
    <property type="evidence" value="ECO:0007669"/>
    <property type="project" value="UniProtKB-EC"/>
</dbReference>
<dbReference type="GO" id="GO:0036211">
    <property type="term" value="P:protein modification process"/>
    <property type="evidence" value="ECO:0007669"/>
    <property type="project" value="InterPro"/>
</dbReference>
<dbReference type="CDD" id="cd16444">
    <property type="entry name" value="LipB"/>
    <property type="match status" value="1"/>
</dbReference>
<dbReference type="FunFam" id="3.30.930.10:FF:000020">
    <property type="entry name" value="Octanoyltransferase"/>
    <property type="match status" value="1"/>
</dbReference>
<dbReference type="Gene3D" id="3.30.930.10">
    <property type="entry name" value="Bira Bifunctional Protein, Domain 2"/>
    <property type="match status" value="1"/>
</dbReference>
<dbReference type="HAMAP" id="MF_00013">
    <property type="entry name" value="LipB"/>
    <property type="match status" value="1"/>
</dbReference>
<dbReference type="InterPro" id="IPR045864">
    <property type="entry name" value="aa-tRNA-synth_II/BPL/LPL"/>
</dbReference>
<dbReference type="InterPro" id="IPR004143">
    <property type="entry name" value="BPL_LPL_catalytic"/>
</dbReference>
<dbReference type="InterPro" id="IPR000544">
    <property type="entry name" value="Octanoyltransferase"/>
</dbReference>
<dbReference type="InterPro" id="IPR020605">
    <property type="entry name" value="Octanoyltransferase_CS"/>
</dbReference>
<dbReference type="NCBIfam" id="TIGR00214">
    <property type="entry name" value="lipB"/>
    <property type="match status" value="1"/>
</dbReference>
<dbReference type="NCBIfam" id="NF010922">
    <property type="entry name" value="PRK14342.1"/>
    <property type="match status" value="1"/>
</dbReference>
<dbReference type="PANTHER" id="PTHR10993:SF7">
    <property type="entry name" value="LIPOYLTRANSFERASE 2, MITOCHONDRIAL-RELATED"/>
    <property type="match status" value="1"/>
</dbReference>
<dbReference type="PANTHER" id="PTHR10993">
    <property type="entry name" value="OCTANOYLTRANSFERASE"/>
    <property type="match status" value="1"/>
</dbReference>
<dbReference type="Pfam" id="PF21948">
    <property type="entry name" value="LplA-B_cat"/>
    <property type="match status" value="1"/>
</dbReference>
<dbReference type="PIRSF" id="PIRSF016262">
    <property type="entry name" value="LPLase"/>
    <property type="match status" value="1"/>
</dbReference>
<dbReference type="SUPFAM" id="SSF55681">
    <property type="entry name" value="Class II aaRS and biotin synthetases"/>
    <property type="match status" value="1"/>
</dbReference>
<dbReference type="PROSITE" id="PS51733">
    <property type="entry name" value="BPL_LPL_CATALYTIC"/>
    <property type="match status" value="1"/>
</dbReference>
<dbReference type="PROSITE" id="PS01313">
    <property type="entry name" value="LIPB"/>
    <property type="match status" value="1"/>
</dbReference>
<evidence type="ECO:0000255" key="1">
    <source>
        <dbReference type="HAMAP-Rule" id="MF_00013"/>
    </source>
</evidence>
<evidence type="ECO:0000255" key="2">
    <source>
        <dbReference type="PROSITE-ProRule" id="PRU01067"/>
    </source>
</evidence>
<protein>
    <recommendedName>
        <fullName evidence="1">Octanoyltransferase</fullName>
        <ecNumber evidence="1">2.3.1.181</ecNumber>
    </recommendedName>
    <alternativeName>
        <fullName evidence="1">Lipoate-protein ligase B</fullName>
    </alternativeName>
    <alternativeName>
        <fullName evidence="1">Lipoyl/octanoyl transferase</fullName>
    </alternativeName>
    <alternativeName>
        <fullName evidence="1">Octanoyl-[acyl-carrier-protein]-protein N-octanoyltransferase</fullName>
    </alternativeName>
</protein>
<feature type="chain" id="PRO_1000001130" description="Octanoyltransferase">
    <location>
        <begin position="1"/>
        <end position="217"/>
    </location>
</feature>
<feature type="domain" description="BPL/LPL catalytic" evidence="2">
    <location>
        <begin position="32"/>
        <end position="207"/>
    </location>
</feature>
<feature type="active site" description="Acyl-thioester intermediate" evidence="1">
    <location>
        <position position="169"/>
    </location>
</feature>
<feature type="binding site" evidence="1">
    <location>
        <begin position="71"/>
        <end position="78"/>
    </location>
    <ligand>
        <name>substrate</name>
    </ligand>
</feature>
<feature type="binding site" evidence="1">
    <location>
        <begin position="138"/>
        <end position="140"/>
    </location>
    <ligand>
        <name>substrate</name>
    </ligand>
</feature>
<feature type="binding site" evidence="1">
    <location>
        <begin position="151"/>
        <end position="153"/>
    </location>
    <ligand>
        <name>substrate</name>
    </ligand>
</feature>
<feature type="site" description="Lowers pKa of active site Cys" evidence="1">
    <location>
        <position position="135"/>
    </location>
</feature>
<proteinExistence type="inferred from homology"/>
<comment type="function">
    <text evidence="1">Catalyzes the transfer of endogenously produced octanoic acid from octanoyl-acyl-carrier-protein onto the lipoyl domains of lipoate-dependent enzymes. Lipoyl-ACP can also act as a substrate although octanoyl-ACP is likely to be the physiological substrate.</text>
</comment>
<comment type="catalytic activity">
    <reaction evidence="1">
        <text>octanoyl-[ACP] + L-lysyl-[protein] = N(6)-octanoyl-L-lysyl-[protein] + holo-[ACP] + H(+)</text>
        <dbReference type="Rhea" id="RHEA:17665"/>
        <dbReference type="Rhea" id="RHEA-COMP:9636"/>
        <dbReference type="Rhea" id="RHEA-COMP:9685"/>
        <dbReference type="Rhea" id="RHEA-COMP:9752"/>
        <dbReference type="Rhea" id="RHEA-COMP:9928"/>
        <dbReference type="ChEBI" id="CHEBI:15378"/>
        <dbReference type="ChEBI" id="CHEBI:29969"/>
        <dbReference type="ChEBI" id="CHEBI:64479"/>
        <dbReference type="ChEBI" id="CHEBI:78463"/>
        <dbReference type="ChEBI" id="CHEBI:78809"/>
        <dbReference type="EC" id="2.3.1.181"/>
    </reaction>
</comment>
<comment type="pathway">
    <text evidence="1">Protein modification; protein lipoylation via endogenous pathway; protein N(6)-(lipoyl)lysine from octanoyl-[acyl-carrier-protein]: step 1/2.</text>
</comment>
<comment type="subcellular location">
    <subcellularLocation>
        <location evidence="1">Cytoplasm</location>
    </subcellularLocation>
</comment>
<comment type="miscellaneous">
    <text evidence="1">In the reaction, the free carboxyl group of octanoic acid is attached via an amide linkage to the epsilon-amino group of a specific lysine residue of lipoyl domains of lipoate-dependent enzymes.</text>
</comment>
<comment type="similarity">
    <text evidence="1">Belongs to the LipB family.</text>
</comment>